<sequence length="372" mass="39625">MAFKSLLSFVSVIGALQGANAALTRRVACPDGVNTATNAACCQLFAVREDLQQNLFHGGLCTAEAHESLRLTFHDAIAISPALEAQGIFGGGGADGSIAIFPEIETNFHPNIGLDEIIELQKPFIARHNISVADFIQFAGAIGASNCAGAPQLAAFVGRKDATQPAPDGLVPEPFHTPDQIFDRLADASQGEFDPILTVWLLTAHTVAAANDVDPTKSGLPFDSTPELWDTQFFLETQLRGTSFPGSGGNQGEVESPLAGEMRLQSDHTIARDSRTACEWQSFVDNQPKAQQMFQFVFHDLSIFGQDINTLVDCTEVVPIPADPQGHTHFPAGLSNADIEQACAETPFPTFPTDPGPKTAVAPVPKPPAARK</sequence>
<reference key="1">
    <citation type="journal article" date="1992" name="Biochimie">
        <title>Characterization of a lignin peroxidase gene from the white-rot fungus Trametes versicolor.</title>
        <authorList>
            <person name="Joensson L.J."/>
            <person name="Nyman P.O."/>
        </authorList>
    </citation>
    <scope>NUCLEOTIDE SEQUENCE [GENOMIC DNA]</scope>
    <source>
        <strain>PRL 572</strain>
    </source>
</reference>
<reference key="2">
    <citation type="journal article" date="1989" name="FEBS Lett.">
        <title>Trametes versicolor ligninase: isozyme sequence homology and substrate specificity.</title>
        <authorList>
            <person name="Joensson L.J."/>
            <person name="Karlsson O."/>
            <person name="Lundquist K."/>
            <person name="Nyman P.O."/>
        </authorList>
    </citation>
    <scope>PROTEIN SEQUENCE OF 27-38</scope>
    <scope>CATALYTIC ACTIVITY</scope>
    <scope>SUBSTRATE SPECIFICITY</scope>
</reference>
<protein>
    <recommendedName>
        <fullName>Ligninase C</fullName>
        <ecNumber evidence="6">1.11.1.14</ecNumber>
    </recommendedName>
    <alternativeName>
        <fullName>Diarylpropane peroxidase</fullName>
    </alternativeName>
    <alternativeName>
        <fullName>Lignin peroxidase</fullName>
    </alternativeName>
</protein>
<dbReference type="EC" id="1.11.1.14" evidence="6"/>
<dbReference type="EMBL" id="M64993">
    <property type="protein sequence ID" value="AAA34049.1"/>
    <property type="molecule type" value="Genomic_DNA"/>
</dbReference>
<dbReference type="PIR" id="S32581">
    <property type="entry name" value="S32581"/>
</dbReference>
<dbReference type="SMR" id="P20013"/>
<dbReference type="CAZy" id="AA2">
    <property type="family name" value="Auxiliary Activities 2"/>
</dbReference>
<dbReference type="PeroxiBase" id="2420">
    <property type="entry name" value="TvLiP12_PRL572"/>
</dbReference>
<dbReference type="OMA" id="MIDCTSA"/>
<dbReference type="UniPathway" id="UPA00892"/>
<dbReference type="GO" id="GO:0016690">
    <property type="term" value="F:diarylpropane peroxidase activity"/>
    <property type="evidence" value="ECO:0007669"/>
    <property type="project" value="UniProtKB-EC"/>
</dbReference>
<dbReference type="GO" id="GO:0020037">
    <property type="term" value="F:heme binding"/>
    <property type="evidence" value="ECO:0007669"/>
    <property type="project" value="InterPro"/>
</dbReference>
<dbReference type="GO" id="GO:0046872">
    <property type="term" value="F:metal ion binding"/>
    <property type="evidence" value="ECO:0007669"/>
    <property type="project" value="UniProtKB-KW"/>
</dbReference>
<dbReference type="GO" id="GO:0034599">
    <property type="term" value="P:cellular response to oxidative stress"/>
    <property type="evidence" value="ECO:0007669"/>
    <property type="project" value="InterPro"/>
</dbReference>
<dbReference type="GO" id="GO:0042744">
    <property type="term" value="P:hydrogen peroxide catabolic process"/>
    <property type="evidence" value="ECO:0007669"/>
    <property type="project" value="UniProtKB-KW"/>
</dbReference>
<dbReference type="GO" id="GO:0046274">
    <property type="term" value="P:lignin catabolic process"/>
    <property type="evidence" value="ECO:0007669"/>
    <property type="project" value="UniProtKB-UniPathway"/>
</dbReference>
<dbReference type="GO" id="GO:0000302">
    <property type="term" value="P:response to reactive oxygen species"/>
    <property type="evidence" value="ECO:0007669"/>
    <property type="project" value="TreeGrafter"/>
</dbReference>
<dbReference type="CDD" id="cd00692">
    <property type="entry name" value="ligninase"/>
    <property type="match status" value="1"/>
</dbReference>
<dbReference type="Gene3D" id="1.10.520.10">
    <property type="match status" value="1"/>
</dbReference>
<dbReference type="Gene3D" id="1.10.420.10">
    <property type="entry name" value="Peroxidase, domain 2"/>
    <property type="match status" value="1"/>
</dbReference>
<dbReference type="InterPro" id="IPR044831">
    <property type="entry name" value="Ccp1-like"/>
</dbReference>
<dbReference type="InterPro" id="IPR002016">
    <property type="entry name" value="Haem_peroxidase"/>
</dbReference>
<dbReference type="InterPro" id="IPR010255">
    <property type="entry name" value="Haem_peroxidase_sf"/>
</dbReference>
<dbReference type="InterPro" id="IPR001621">
    <property type="entry name" value="Ligninase"/>
</dbReference>
<dbReference type="InterPro" id="IPR024589">
    <property type="entry name" value="Ligninase_C"/>
</dbReference>
<dbReference type="InterPro" id="IPR019794">
    <property type="entry name" value="Peroxidases_AS"/>
</dbReference>
<dbReference type="PANTHER" id="PTHR31356:SF66">
    <property type="entry name" value="CATALASE-PEROXIDASE"/>
    <property type="match status" value="1"/>
</dbReference>
<dbReference type="PANTHER" id="PTHR31356">
    <property type="entry name" value="THYLAKOID LUMENAL 29 KDA PROTEIN, CHLOROPLASTIC-RELATED"/>
    <property type="match status" value="1"/>
</dbReference>
<dbReference type="Pfam" id="PF00141">
    <property type="entry name" value="peroxidase"/>
    <property type="match status" value="1"/>
</dbReference>
<dbReference type="Pfam" id="PF11895">
    <property type="entry name" value="Peroxidase_ext"/>
    <property type="match status" value="1"/>
</dbReference>
<dbReference type="PRINTS" id="PR00462">
    <property type="entry name" value="LIGNINASE"/>
</dbReference>
<dbReference type="PRINTS" id="PR00458">
    <property type="entry name" value="PEROXIDASE"/>
</dbReference>
<dbReference type="SUPFAM" id="SSF48113">
    <property type="entry name" value="Heme-dependent peroxidases"/>
    <property type="match status" value="1"/>
</dbReference>
<dbReference type="PROSITE" id="PS00436">
    <property type="entry name" value="PEROXIDASE_2"/>
    <property type="match status" value="1"/>
</dbReference>
<dbReference type="PROSITE" id="PS50873">
    <property type="entry name" value="PEROXIDASE_4"/>
    <property type="match status" value="1"/>
</dbReference>
<name>LIGC_TRAVE</name>
<feature type="signal peptide" evidence="6">
    <location>
        <begin position="1"/>
        <end position="26"/>
    </location>
</feature>
<feature type="chain" id="PRO_0000023777" description="Ligninase C">
    <location>
        <begin position="27"/>
        <end position="372"/>
    </location>
</feature>
<feature type="region of interest" description="Disordered" evidence="5">
    <location>
        <begin position="346"/>
        <end position="372"/>
    </location>
</feature>
<feature type="active site" description="Proton acceptor" evidence="3 4">
    <location>
        <position position="74"/>
    </location>
</feature>
<feature type="binding site" evidence="3">
    <location>
        <position position="75"/>
    </location>
    <ligand>
        <name>Ca(2+)</name>
        <dbReference type="ChEBI" id="CHEBI:29108"/>
        <label>1</label>
    </ligand>
</feature>
<feature type="binding site" evidence="3">
    <location>
        <position position="93"/>
    </location>
    <ligand>
        <name>Ca(2+)</name>
        <dbReference type="ChEBI" id="CHEBI:29108"/>
        <label>1</label>
    </ligand>
</feature>
<feature type="binding site" evidence="3">
    <location>
        <position position="95"/>
    </location>
    <ligand>
        <name>Ca(2+)</name>
        <dbReference type="ChEBI" id="CHEBI:29108"/>
        <label>1</label>
    </ligand>
</feature>
<feature type="binding site" evidence="3">
    <location>
        <position position="97"/>
    </location>
    <ligand>
        <name>Ca(2+)</name>
        <dbReference type="ChEBI" id="CHEBI:29108"/>
        <label>1</label>
    </ligand>
</feature>
<feature type="binding site" description="axial binding residue" evidence="3">
    <location>
        <position position="205"/>
    </location>
    <ligand>
        <name>heme b</name>
        <dbReference type="ChEBI" id="CHEBI:60344"/>
    </ligand>
    <ligandPart>
        <name>Fe</name>
        <dbReference type="ChEBI" id="CHEBI:18248"/>
    </ligandPart>
</feature>
<feature type="binding site" evidence="3">
    <location>
        <position position="206"/>
    </location>
    <ligand>
        <name>Ca(2+)</name>
        <dbReference type="ChEBI" id="CHEBI:29108"/>
        <label>2</label>
    </ligand>
</feature>
<feature type="binding site" evidence="3">
    <location>
        <position position="223"/>
    </location>
    <ligand>
        <name>Ca(2+)</name>
        <dbReference type="ChEBI" id="CHEBI:29108"/>
        <label>2</label>
    </ligand>
</feature>
<feature type="binding site" evidence="3">
    <location>
        <position position="225"/>
    </location>
    <ligand>
        <name>Ca(2+)</name>
        <dbReference type="ChEBI" id="CHEBI:29108"/>
        <label>2</label>
    </ligand>
</feature>
<feature type="binding site" evidence="3">
    <location>
        <position position="228"/>
    </location>
    <ligand>
        <name>Ca(2+)</name>
        <dbReference type="ChEBI" id="CHEBI:29108"/>
        <label>2</label>
    </ligand>
</feature>
<feature type="binding site" evidence="3">
    <location>
        <position position="230"/>
    </location>
    <ligand>
        <name>Ca(2+)</name>
        <dbReference type="ChEBI" id="CHEBI:29108"/>
        <label>2</label>
    </ligand>
</feature>
<feature type="site" description="Transition state stabilizer" evidence="3">
    <location>
        <position position="70"/>
    </location>
</feature>
<feature type="glycosylation site" description="N-linked (GlcNAc...) asparagine" evidence="2">
    <location>
        <position position="129"/>
    </location>
</feature>
<keyword id="KW-0106">Calcium</keyword>
<keyword id="KW-0903">Direct protein sequencing</keyword>
<keyword id="KW-0325">Glycoprotein</keyword>
<keyword id="KW-0349">Heme</keyword>
<keyword id="KW-0376">Hydrogen peroxide</keyword>
<keyword id="KW-0408">Iron</keyword>
<keyword id="KW-0439">Lignin degradation</keyword>
<keyword id="KW-0479">Metal-binding</keyword>
<keyword id="KW-0560">Oxidoreductase</keyword>
<keyword id="KW-0575">Peroxidase</keyword>
<keyword id="KW-0732">Signal</keyword>
<comment type="function">
    <text evidence="1">Depolymerization of lignin. Catalyzes the C(alpha)-C(beta) cleavage of the propyl side chains of lignin.</text>
</comment>
<comment type="catalytic activity">
    <reaction evidence="6">
        <text>1-(3,4-dimethoxyphenyl)-2-(2-methoxyphenoxy)propane-1,3-diol + H2O2 = 3,4-dimethoxybenzaldehyde + guaiacol + glycolaldehyde + H2O</text>
        <dbReference type="Rhea" id="RHEA:48004"/>
        <dbReference type="ChEBI" id="CHEBI:15377"/>
        <dbReference type="ChEBI" id="CHEBI:16240"/>
        <dbReference type="ChEBI" id="CHEBI:17071"/>
        <dbReference type="ChEBI" id="CHEBI:17098"/>
        <dbReference type="ChEBI" id="CHEBI:28591"/>
        <dbReference type="ChEBI" id="CHEBI:86963"/>
        <dbReference type="EC" id="1.11.1.14"/>
    </reaction>
</comment>
<comment type="catalytic activity">
    <reaction evidence="6">
        <text>2 (3,4-dimethoxyphenyl)methanol + H2O2 = 2 (3,4-dimethoxyphenyl)methanol radical + 2 H2O</text>
        <dbReference type="Rhea" id="RHEA:30271"/>
        <dbReference type="ChEBI" id="CHEBI:15377"/>
        <dbReference type="ChEBI" id="CHEBI:16240"/>
        <dbReference type="ChEBI" id="CHEBI:62150"/>
        <dbReference type="ChEBI" id="CHEBI:88143"/>
        <dbReference type="EC" id="1.11.1.14"/>
    </reaction>
</comment>
<comment type="cofactor">
    <cofactor evidence="3">
        <name>Ca(2+)</name>
        <dbReference type="ChEBI" id="CHEBI:29108"/>
    </cofactor>
    <text evidence="3">Binds 2 calcium ions per subunit.</text>
</comment>
<comment type="cofactor">
    <cofactor evidence="1">
        <name>heme b</name>
        <dbReference type="ChEBI" id="CHEBI:60344"/>
    </cofactor>
    <text evidence="1">Binds 1 heme b (iron(II)-protoporphyrin IX) group per subunit.</text>
</comment>
<comment type="pathway">
    <text>Secondary metabolite metabolism; lignin degradation.</text>
</comment>
<comment type="developmental stage">
    <text>Ligninases are expressed during secondary metabolism, and are triggered by nutrient limitation.</text>
</comment>
<comment type="similarity">
    <text evidence="7">Belongs to the peroxidase family. Ligninase subfamily.</text>
</comment>
<proteinExistence type="evidence at protein level"/>
<accession>P20013</accession>
<evidence type="ECO:0000250" key="1">
    <source>
        <dbReference type="UniProtKB" id="P06181"/>
    </source>
</evidence>
<evidence type="ECO:0000255" key="2"/>
<evidence type="ECO:0000255" key="3">
    <source>
        <dbReference type="PROSITE-ProRule" id="PRU00297"/>
    </source>
</evidence>
<evidence type="ECO:0000255" key="4">
    <source>
        <dbReference type="PROSITE-ProRule" id="PRU10012"/>
    </source>
</evidence>
<evidence type="ECO:0000256" key="5">
    <source>
        <dbReference type="SAM" id="MobiDB-lite"/>
    </source>
</evidence>
<evidence type="ECO:0000269" key="6">
    <source>
    </source>
</evidence>
<evidence type="ECO:0000305" key="7"/>
<organism>
    <name type="scientific">Trametes versicolor</name>
    <name type="common">White-rot fungus</name>
    <name type="synonym">Coriolus versicolor</name>
    <dbReference type="NCBI Taxonomy" id="5325"/>
    <lineage>
        <taxon>Eukaryota</taxon>
        <taxon>Fungi</taxon>
        <taxon>Dikarya</taxon>
        <taxon>Basidiomycota</taxon>
        <taxon>Agaricomycotina</taxon>
        <taxon>Agaricomycetes</taxon>
        <taxon>Polyporales</taxon>
        <taxon>Polyporaceae</taxon>
        <taxon>Trametes</taxon>
    </lineage>
</organism>